<accession>P35410</accession>
<accession>Q5SUN5</accession>
<dbReference type="EMBL" id="S78653">
    <property type="protein sequence ID" value="AAB21255.1"/>
    <property type="molecule type" value="Genomic_DNA"/>
</dbReference>
<dbReference type="EMBL" id="AL035542">
    <property type="protein sequence ID" value="CAB44503.1"/>
    <property type="molecule type" value="Genomic_DNA"/>
</dbReference>
<dbReference type="EMBL" id="BX000531">
    <property type="status" value="NOT_ANNOTATED_CDS"/>
    <property type="molecule type" value="Genomic_DNA"/>
</dbReference>
<dbReference type="EMBL" id="BX247947">
    <property type="status" value="NOT_ANNOTATED_CDS"/>
    <property type="molecule type" value="Genomic_DNA"/>
</dbReference>
<dbReference type="EMBL" id="CR759956">
    <property type="status" value="NOT_ANNOTATED_CDS"/>
    <property type="molecule type" value="Genomic_DNA"/>
</dbReference>
<dbReference type="EMBL" id="CR759768">
    <property type="status" value="NOT_ANNOTATED_CDS"/>
    <property type="molecule type" value="Genomic_DNA"/>
</dbReference>
<dbReference type="EMBL" id="BX927133">
    <property type="status" value="NOT_ANNOTATED_CDS"/>
    <property type="molecule type" value="Genomic_DNA"/>
</dbReference>
<dbReference type="EMBL" id="CR388393">
    <property type="status" value="NOT_ANNOTATED_CDS"/>
    <property type="molecule type" value="Genomic_DNA"/>
</dbReference>
<dbReference type="EMBL" id="CH471081">
    <property type="protein sequence ID" value="EAX03197.1"/>
    <property type="molecule type" value="Genomic_DNA"/>
</dbReference>
<dbReference type="EMBL" id="BC069127">
    <property type="protein sequence ID" value="AAH69127.1"/>
    <property type="molecule type" value="mRNA"/>
</dbReference>
<dbReference type="EMBL" id="BC069345">
    <property type="protein sequence ID" value="AAH69345.1"/>
    <property type="molecule type" value="mRNA"/>
</dbReference>
<dbReference type="EMBL" id="BC101176">
    <property type="protein sequence ID" value="AAI01177.1"/>
    <property type="molecule type" value="mRNA"/>
</dbReference>
<dbReference type="EMBL" id="BC101177">
    <property type="protein sequence ID" value="AAI01178.1"/>
    <property type="molecule type" value="mRNA"/>
</dbReference>
<dbReference type="CCDS" id="CCDS4661.1"/>
<dbReference type="PIR" id="A39485">
    <property type="entry name" value="A39485"/>
</dbReference>
<dbReference type="RefSeq" id="NP_443199.1">
    <property type="nucleotide sequence ID" value="NM_052967.2"/>
</dbReference>
<dbReference type="SMR" id="P35410"/>
<dbReference type="BioGRID" id="125516">
    <property type="interactions" value="1"/>
</dbReference>
<dbReference type="FunCoup" id="P35410">
    <property type="interactions" value="1"/>
</dbReference>
<dbReference type="STRING" id="9606.ENSP00000366331"/>
<dbReference type="ChEMBL" id="CHEMBL4523857"/>
<dbReference type="GlyCosmos" id="P35410">
    <property type="glycosylation" value="2 sites, No reported glycans"/>
</dbReference>
<dbReference type="GlyGen" id="P35410">
    <property type="glycosylation" value="2 sites"/>
</dbReference>
<dbReference type="BioMuta" id="MAS1L"/>
<dbReference type="DMDM" id="547920"/>
<dbReference type="PaxDb" id="9606-ENSP00000366331"/>
<dbReference type="Antibodypedia" id="2949">
    <property type="antibodies" value="173 antibodies from 31 providers"/>
</dbReference>
<dbReference type="DNASU" id="116511"/>
<dbReference type="Ensembl" id="ENST00000377127.4">
    <property type="protein sequence ID" value="ENSP00000366331.3"/>
    <property type="gene ID" value="ENSG00000204687.4"/>
</dbReference>
<dbReference type="Ensembl" id="ENST00000383549.3">
    <property type="protein sequence ID" value="ENSP00000373041.2"/>
    <property type="gene ID" value="ENSG00000206470.3"/>
</dbReference>
<dbReference type="Ensembl" id="ENST00000383643.3">
    <property type="protein sequence ID" value="ENSP00000373139.2"/>
    <property type="gene ID" value="ENSG00000206515.3"/>
</dbReference>
<dbReference type="Ensembl" id="ENST00000415802.3">
    <property type="protein sequence ID" value="ENSP00000405164.2"/>
    <property type="gene ID" value="ENSG00000233141.3"/>
</dbReference>
<dbReference type="Ensembl" id="ENST00000418003.3">
    <property type="protein sequence ID" value="ENSP00000410649.2"/>
    <property type="gene ID" value="ENSG00000234954.3"/>
</dbReference>
<dbReference type="Ensembl" id="ENST00000420035.3">
    <property type="protein sequence ID" value="ENSP00000405030.2"/>
    <property type="gene ID" value="ENSG00000228377.3"/>
</dbReference>
<dbReference type="Ensembl" id="ENST00000449044.3">
    <property type="protein sequence ID" value="ENSP00000399042.2"/>
    <property type="gene ID" value="ENSG00000228515.3"/>
</dbReference>
<dbReference type="Ensembl" id="ENST00000451019.3">
    <property type="protein sequence ID" value="ENSP00000392071.2"/>
    <property type="gene ID" value="ENSG00000237284.3"/>
</dbReference>
<dbReference type="GeneID" id="116511"/>
<dbReference type="KEGG" id="hsa:116511"/>
<dbReference type="MANE-Select" id="ENST00000377127.4">
    <property type="protein sequence ID" value="ENSP00000366331.3"/>
    <property type="RefSeq nucleotide sequence ID" value="NM_052967.2"/>
    <property type="RefSeq protein sequence ID" value="NP_443199.1"/>
</dbReference>
<dbReference type="AGR" id="HGNC:13961"/>
<dbReference type="CTD" id="116511"/>
<dbReference type="DisGeNET" id="116511"/>
<dbReference type="GeneCards" id="MAS1L"/>
<dbReference type="HGNC" id="HGNC:13961">
    <property type="gene designation" value="MAS1L"/>
</dbReference>
<dbReference type="HPA" id="ENSG00000204687">
    <property type="expression patterns" value="Tissue enhanced (cervix, epididymis)"/>
</dbReference>
<dbReference type="MalaCards" id="MAS1L"/>
<dbReference type="MIM" id="607235">
    <property type="type" value="gene"/>
</dbReference>
<dbReference type="neXtProt" id="NX_P35410"/>
<dbReference type="OpenTargets" id="ENSG00000204687"/>
<dbReference type="PharmGKB" id="PA134912067"/>
<dbReference type="VEuPathDB" id="HostDB:ENSG00000204687"/>
<dbReference type="eggNOG" id="ENOG502SNTZ">
    <property type="taxonomic scope" value="Eukaryota"/>
</dbReference>
<dbReference type="GeneTree" id="ENSGT01030000234639"/>
<dbReference type="HOGENOM" id="CLU_009579_4_2_1"/>
<dbReference type="InParanoid" id="P35410"/>
<dbReference type="OMA" id="NGTVFWL"/>
<dbReference type="OrthoDB" id="9666267at2759"/>
<dbReference type="PAN-GO" id="P35410">
    <property type="GO annotations" value="2 GO annotations based on evolutionary models"/>
</dbReference>
<dbReference type="PhylomeDB" id="P35410"/>
<dbReference type="TreeFam" id="TF336336"/>
<dbReference type="PathwayCommons" id="P35410"/>
<dbReference type="BioGRID-ORCS" id="116511">
    <property type="hits" value="11 hits in 1136 CRISPR screens"/>
</dbReference>
<dbReference type="GeneWiki" id="MAS1L"/>
<dbReference type="GenomeRNAi" id="116511"/>
<dbReference type="Pharos" id="P35410">
    <property type="development level" value="Tbio"/>
</dbReference>
<dbReference type="PRO" id="PR:P35410"/>
<dbReference type="Proteomes" id="UP000005640">
    <property type="component" value="Chromosome 6"/>
</dbReference>
<dbReference type="RNAct" id="P35410">
    <property type="molecule type" value="protein"/>
</dbReference>
<dbReference type="Bgee" id="ENSG00000204687">
    <property type="expression patterns" value="Expressed in smooth muscle tissue and 43 other cell types or tissues"/>
</dbReference>
<dbReference type="ExpressionAtlas" id="P35410">
    <property type="expression patterns" value="baseline and differential"/>
</dbReference>
<dbReference type="GO" id="GO:0005829">
    <property type="term" value="C:cytosol"/>
    <property type="evidence" value="ECO:0000314"/>
    <property type="project" value="HPA"/>
</dbReference>
<dbReference type="GO" id="GO:0016020">
    <property type="term" value="C:membrane"/>
    <property type="evidence" value="ECO:0000303"/>
    <property type="project" value="UniProtKB"/>
</dbReference>
<dbReference type="GO" id="GO:0005654">
    <property type="term" value="C:nucleoplasm"/>
    <property type="evidence" value="ECO:0000314"/>
    <property type="project" value="HPA"/>
</dbReference>
<dbReference type="GO" id="GO:0005886">
    <property type="term" value="C:plasma membrane"/>
    <property type="evidence" value="ECO:0000314"/>
    <property type="project" value="HPA"/>
</dbReference>
<dbReference type="GO" id="GO:0004930">
    <property type="term" value="F:G protein-coupled receptor activity"/>
    <property type="evidence" value="ECO:0000318"/>
    <property type="project" value="GO_Central"/>
</dbReference>
<dbReference type="GO" id="GO:0007186">
    <property type="term" value="P:G protein-coupled receptor signaling pathway"/>
    <property type="evidence" value="ECO:0000318"/>
    <property type="project" value="GO_Central"/>
</dbReference>
<dbReference type="CDD" id="cd15113">
    <property type="entry name" value="7tmA_MAS1L"/>
    <property type="match status" value="1"/>
</dbReference>
<dbReference type="FunFam" id="1.20.1070.10:FF:000432">
    <property type="entry name" value="Mas-related G protein-coupled receptor D"/>
    <property type="match status" value="1"/>
</dbReference>
<dbReference type="Gene3D" id="1.20.1070.10">
    <property type="entry name" value="Rhodopsin 7-helix transmembrane proteins"/>
    <property type="match status" value="1"/>
</dbReference>
<dbReference type="InterPro" id="IPR000276">
    <property type="entry name" value="GPCR_Rhodpsn"/>
</dbReference>
<dbReference type="InterPro" id="IPR017452">
    <property type="entry name" value="GPCR_Rhodpsn_7TM"/>
</dbReference>
<dbReference type="InterPro" id="IPR026234">
    <property type="entry name" value="MRGPCRFAMILY"/>
</dbReference>
<dbReference type="PANTHER" id="PTHR11334">
    <property type="entry name" value="MAS-RELATED G-PROTEIN COUPLED RECEPTOR"/>
    <property type="match status" value="1"/>
</dbReference>
<dbReference type="PANTHER" id="PTHR11334:SF22">
    <property type="entry name" value="MAS-RELATED G-PROTEIN COUPLED RECEPTOR MRG-RELATED"/>
    <property type="match status" value="1"/>
</dbReference>
<dbReference type="PRINTS" id="PR00237">
    <property type="entry name" value="GPCRRHODOPSN"/>
</dbReference>
<dbReference type="PRINTS" id="PR02108">
    <property type="entry name" value="MRGPCRFAMILY"/>
</dbReference>
<dbReference type="SUPFAM" id="SSF81321">
    <property type="entry name" value="Family A G protein-coupled receptor-like"/>
    <property type="match status" value="1"/>
</dbReference>
<dbReference type="PROSITE" id="PS00237">
    <property type="entry name" value="G_PROTEIN_RECEP_F1_1"/>
    <property type="match status" value="1"/>
</dbReference>
<dbReference type="PROSITE" id="PS50262">
    <property type="entry name" value="G_PROTEIN_RECEP_F1_2"/>
    <property type="match status" value="1"/>
</dbReference>
<organism>
    <name type="scientific">Homo sapiens</name>
    <name type="common">Human</name>
    <dbReference type="NCBI Taxonomy" id="9606"/>
    <lineage>
        <taxon>Eukaryota</taxon>
        <taxon>Metazoa</taxon>
        <taxon>Chordata</taxon>
        <taxon>Craniata</taxon>
        <taxon>Vertebrata</taxon>
        <taxon>Euteleostomi</taxon>
        <taxon>Mammalia</taxon>
        <taxon>Eutheria</taxon>
        <taxon>Euarchontoglires</taxon>
        <taxon>Primates</taxon>
        <taxon>Haplorrhini</taxon>
        <taxon>Catarrhini</taxon>
        <taxon>Hominidae</taxon>
        <taxon>Homo</taxon>
    </lineage>
</organism>
<proteinExistence type="evidence at transcript level"/>
<feature type="chain" id="PRO_0000069717" description="Mas-related G-protein coupled receptor MRG">
    <location>
        <begin position="1"/>
        <end position="378"/>
    </location>
</feature>
<feature type="topological domain" description="Extracellular" evidence="1">
    <location>
        <begin position="1"/>
        <end position="77"/>
    </location>
</feature>
<feature type="transmembrane region" description="Helical; Name=1" evidence="1">
    <location>
        <begin position="78"/>
        <end position="101"/>
    </location>
</feature>
<feature type="topological domain" description="Cytoplasmic" evidence="1">
    <location>
        <begin position="102"/>
        <end position="109"/>
    </location>
</feature>
<feature type="transmembrane region" description="Helical; Name=2" evidence="1">
    <location>
        <begin position="110"/>
        <end position="136"/>
    </location>
</feature>
<feature type="topological domain" description="Extracellular" evidence="1">
    <location>
        <begin position="137"/>
        <end position="154"/>
    </location>
</feature>
<feature type="transmembrane region" description="Helical; Name=3" evidence="1">
    <location>
        <begin position="155"/>
        <end position="169"/>
    </location>
</feature>
<feature type="topological domain" description="Cytoplasmic" evidence="1">
    <location>
        <begin position="170"/>
        <end position="191"/>
    </location>
</feature>
<feature type="transmembrane region" description="Helical; Name=4" evidence="1">
    <location>
        <begin position="192"/>
        <end position="207"/>
    </location>
</feature>
<feature type="topological domain" description="Extracellular" evidence="1">
    <location>
        <begin position="208"/>
        <end position="221"/>
    </location>
</feature>
<feature type="transmembrane region" description="Helical; Name=5" evidence="1">
    <location>
        <begin position="222"/>
        <end position="248"/>
    </location>
</feature>
<feature type="topological domain" description="Cytoplasmic" evidence="1">
    <location>
        <begin position="249"/>
        <end position="264"/>
    </location>
</feature>
<feature type="transmembrane region" description="Helical; Name=6" evidence="1">
    <location>
        <begin position="265"/>
        <end position="286"/>
    </location>
</feature>
<feature type="topological domain" description="Extracellular" evidence="1">
    <location>
        <begin position="287"/>
        <end position="297"/>
    </location>
</feature>
<feature type="transmembrane region" description="Helical; Name=7" evidence="1">
    <location>
        <begin position="298"/>
        <end position="317"/>
    </location>
</feature>
<feature type="topological domain" description="Cytoplasmic" evidence="1">
    <location>
        <begin position="318"/>
        <end position="378"/>
    </location>
</feature>
<feature type="region of interest" description="Disordered" evidence="3">
    <location>
        <begin position="344"/>
        <end position="378"/>
    </location>
</feature>
<feature type="compositionally biased region" description="Basic and acidic residues" evidence="3">
    <location>
        <begin position="368"/>
        <end position="378"/>
    </location>
</feature>
<feature type="glycosylation site" description="N-linked (GlcNAc...) asparagine" evidence="1">
    <location>
        <position position="54"/>
    </location>
</feature>
<feature type="glycosylation site" description="N-linked (GlcNAc...) asparagine" evidence="1">
    <location>
        <position position="57"/>
    </location>
</feature>
<feature type="sequence variant" id="VAR_049416" description="In dbSNP:rs17184100.">
    <original>D</original>
    <variation>E</variation>
    <location>
        <position position="288"/>
    </location>
</feature>
<name>MAS1L_HUMAN</name>
<evidence type="ECO:0000255" key="1"/>
<evidence type="ECO:0000255" key="2">
    <source>
        <dbReference type="PROSITE-ProRule" id="PRU00521"/>
    </source>
</evidence>
<evidence type="ECO:0000256" key="3">
    <source>
        <dbReference type="SAM" id="MobiDB-lite"/>
    </source>
</evidence>
<keyword id="KW-1003">Cell membrane</keyword>
<keyword id="KW-0297">G-protein coupled receptor</keyword>
<keyword id="KW-0325">Glycoprotein</keyword>
<keyword id="KW-0472">Membrane</keyword>
<keyword id="KW-0675">Receptor</keyword>
<keyword id="KW-1185">Reference proteome</keyword>
<keyword id="KW-0807">Transducer</keyword>
<keyword id="KW-0812">Transmembrane</keyword>
<keyword id="KW-1133">Transmembrane helix</keyword>
<comment type="subcellular location">
    <subcellularLocation>
        <location>Cell membrane</location>
        <topology>Multi-pass membrane protein</topology>
    </subcellularLocation>
</comment>
<comment type="similarity">
    <text evidence="2">Belongs to the G-protein coupled receptor 1 family. Mas subfamily.</text>
</comment>
<sequence>MVWGKICWFSQRAGWTVFAESQISLSCSLCLHSGDQEAQNPNLVSQLCGVFLQNETNETIHMQMSMAVGQQALPLNIIAPKAVLVSLCGVLLNGTVFWLLCCGATNPYMVYILHLVAADVIYLCCSAVGFLQVTLLTYHGVVFFIPDFLAILSPFSFEVCLCLLVAISTERCVCVLFPIWYRCHRPKYTSNVVCTLIWGLPFCINIVKSLFLTYWKHVKACVIFLKLSGLFHAILSLVMCVSSLTLLIRFLCCSQQQKATRVYAVVQISAPMFLLWALPLSVAPLITDFKMFVTTSYLISLFLIINSSANPIIYFFVGSLRKKRLKESLRVILQRALADKPEVGRNKKAAGIDPMEQPHSTQHVENLLPREHRVDVET</sequence>
<reference key="1">
    <citation type="journal article" date="1991" name="Mol. Endocrinol.">
        <title>Cloning and functional characterization of a novel mas-related gene, modulating intracellular angiotensin II actions.</title>
        <authorList>
            <person name="Monnot C."/>
            <person name="Weber V."/>
            <person name="Stinnakre J."/>
            <person name="Bihoreau C."/>
            <person name="Teutsch B."/>
            <person name="Corvol P."/>
            <person name="Clauser E."/>
        </authorList>
    </citation>
    <scope>NUCLEOTIDE SEQUENCE [GENOMIC DNA]</scope>
</reference>
<reference key="2">
    <citation type="journal article" date="2003" name="Nature">
        <title>The DNA sequence and analysis of human chromosome 6.</title>
        <authorList>
            <person name="Mungall A.J."/>
            <person name="Palmer S.A."/>
            <person name="Sims S.K."/>
            <person name="Edwards C.A."/>
            <person name="Ashurst J.L."/>
            <person name="Wilming L."/>
            <person name="Jones M.C."/>
            <person name="Horton R."/>
            <person name="Hunt S.E."/>
            <person name="Scott C.E."/>
            <person name="Gilbert J.G.R."/>
            <person name="Clamp M.E."/>
            <person name="Bethel G."/>
            <person name="Milne S."/>
            <person name="Ainscough R."/>
            <person name="Almeida J.P."/>
            <person name="Ambrose K.D."/>
            <person name="Andrews T.D."/>
            <person name="Ashwell R.I.S."/>
            <person name="Babbage A.K."/>
            <person name="Bagguley C.L."/>
            <person name="Bailey J."/>
            <person name="Banerjee R."/>
            <person name="Barker D.J."/>
            <person name="Barlow K.F."/>
            <person name="Bates K."/>
            <person name="Beare D.M."/>
            <person name="Beasley H."/>
            <person name="Beasley O."/>
            <person name="Bird C.P."/>
            <person name="Blakey S.E."/>
            <person name="Bray-Allen S."/>
            <person name="Brook J."/>
            <person name="Brown A.J."/>
            <person name="Brown J.Y."/>
            <person name="Burford D.C."/>
            <person name="Burrill W."/>
            <person name="Burton J."/>
            <person name="Carder C."/>
            <person name="Carter N.P."/>
            <person name="Chapman J.C."/>
            <person name="Clark S.Y."/>
            <person name="Clark G."/>
            <person name="Clee C.M."/>
            <person name="Clegg S."/>
            <person name="Cobley V."/>
            <person name="Collier R.E."/>
            <person name="Collins J.E."/>
            <person name="Colman L.K."/>
            <person name="Corby N.R."/>
            <person name="Coville G.J."/>
            <person name="Culley K.M."/>
            <person name="Dhami P."/>
            <person name="Davies J."/>
            <person name="Dunn M."/>
            <person name="Earthrowl M.E."/>
            <person name="Ellington A.E."/>
            <person name="Evans K.A."/>
            <person name="Faulkner L."/>
            <person name="Francis M.D."/>
            <person name="Frankish A."/>
            <person name="Frankland J."/>
            <person name="French L."/>
            <person name="Garner P."/>
            <person name="Garnett J."/>
            <person name="Ghori M.J."/>
            <person name="Gilby L.M."/>
            <person name="Gillson C.J."/>
            <person name="Glithero R.J."/>
            <person name="Grafham D.V."/>
            <person name="Grant M."/>
            <person name="Gribble S."/>
            <person name="Griffiths C."/>
            <person name="Griffiths M.N.D."/>
            <person name="Hall R."/>
            <person name="Halls K.S."/>
            <person name="Hammond S."/>
            <person name="Harley J.L."/>
            <person name="Hart E.A."/>
            <person name="Heath P.D."/>
            <person name="Heathcott R."/>
            <person name="Holmes S.J."/>
            <person name="Howden P.J."/>
            <person name="Howe K.L."/>
            <person name="Howell G.R."/>
            <person name="Huckle E."/>
            <person name="Humphray S.J."/>
            <person name="Humphries M.D."/>
            <person name="Hunt A.R."/>
            <person name="Johnson C.M."/>
            <person name="Joy A.A."/>
            <person name="Kay M."/>
            <person name="Keenan S.J."/>
            <person name="Kimberley A.M."/>
            <person name="King A."/>
            <person name="Laird G.K."/>
            <person name="Langford C."/>
            <person name="Lawlor S."/>
            <person name="Leongamornlert D.A."/>
            <person name="Leversha M."/>
            <person name="Lloyd C.R."/>
            <person name="Lloyd D.M."/>
            <person name="Loveland J.E."/>
            <person name="Lovell J."/>
            <person name="Martin S."/>
            <person name="Mashreghi-Mohammadi M."/>
            <person name="Maslen G.L."/>
            <person name="Matthews L."/>
            <person name="McCann O.T."/>
            <person name="McLaren S.J."/>
            <person name="McLay K."/>
            <person name="McMurray A."/>
            <person name="Moore M.J.F."/>
            <person name="Mullikin J.C."/>
            <person name="Niblett D."/>
            <person name="Nickerson T."/>
            <person name="Novik K.L."/>
            <person name="Oliver K."/>
            <person name="Overton-Larty E.K."/>
            <person name="Parker A."/>
            <person name="Patel R."/>
            <person name="Pearce A.V."/>
            <person name="Peck A.I."/>
            <person name="Phillimore B.J.C.T."/>
            <person name="Phillips S."/>
            <person name="Plumb R.W."/>
            <person name="Porter K.M."/>
            <person name="Ramsey Y."/>
            <person name="Ranby S.A."/>
            <person name="Rice C.M."/>
            <person name="Ross M.T."/>
            <person name="Searle S.M."/>
            <person name="Sehra H.K."/>
            <person name="Sheridan E."/>
            <person name="Skuce C.D."/>
            <person name="Smith S."/>
            <person name="Smith M."/>
            <person name="Spraggon L."/>
            <person name="Squares S.L."/>
            <person name="Steward C.A."/>
            <person name="Sycamore N."/>
            <person name="Tamlyn-Hall G."/>
            <person name="Tester J."/>
            <person name="Theaker A.J."/>
            <person name="Thomas D.W."/>
            <person name="Thorpe A."/>
            <person name="Tracey A."/>
            <person name="Tromans A."/>
            <person name="Tubby B."/>
            <person name="Wall M."/>
            <person name="Wallis J.M."/>
            <person name="West A.P."/>
            <person name="White S.S."/>
            <person name="Whitehead S.L."/>
            <person name="Whittaker H."/>
            <person name="Wild A."/>
            <person name="Willey D.J."/>
            <person name="Wilmer T.E."/>
            <person name="Wood J.M."/>
            <person name="Wray P.W."/>
            <person name="Wyatt J.C."/>
            <person name="Young L."/>
            <person name="Younger R.M."/>
            <person name="Bentley D.R."/>
            <person name="Coulson A."/>
            <person name="Durbin R.M."/>
            <person name="Hubbard T."/>
            <person name="Sulston J.E."/>
            <person name="Dunham I."/>
            <person name="Rogers J."/>
            <person name="Beck S."/>
        </authorList>
    </citation>
    <scope>NUCLEOTIDE SEQUENCE [LARGE SCALE GENOMIC DNA]</scope>
</reference>
<reference key="3">
    <citation type="submission" date="2005-07" db="EMBL/GenBank/DDBJ databases">
        <authorList>
            <person name="Mural R.J."/>
            <person name="Istrail S."/>
            <person name="Sutton G."/>
            <person name="Florea L."/>
            <person name="Halpern A.L."/>
            <person name="Mobarry C.M."/>
            <person name="Lippert R."/>
            <person name="Walenz B."/>
            <person name="Shatkay H."/>
            <person name="Dew I."/>
            <person name="Miller J.R."/>
            <person name="Flanigan M.J."/>
            <person name="Edwards N.J."/>
            <person name="Bolanos R."/>
            <person name="Fasulo D."/>
            <person name="Halldorsson B.V."/>
            <person name="Hannenhalli S."/>
            <person name="Turner R."/>
            <person name="Yooseph S."/>
            <person name="Lu F."/>
            <person name="Nusskern D.R."/>
            <person name="Shue B.C."/>
            <person name="Zheng X.H."/>
            <person name="Zhong F."/>
            <person name="Delcher A.L."/>
            <person name="Huson D.H."/>
            <person name="Kravitz S.A."/>
            <person name="Mouchard L."/>
            <person name="Reinert K."/>
            <person name="Remington K.A."/>
            <person name="Clark A.G."/>
            <person name="Waterman M.S."/>
            <person name="Eichler E.E."/>
            <person name="Adams M.D."/>
            <person name="Hunkapiller M.W."/>
            <person name="Myers E.W."/>
            <person name="Venter J.C."/>
        </authorList>
    </citation>
    <scope>NUCLEOTIDE SEQUENCE [LARGE SCALE GENOMIC DNA]</scope>
</reference>
<reference key="4">
    <citation type="journal article" date="2004" name="Genome Res.">
        <title>The status, quality, and expansion of the NIH full-length cDNA project: the Mammalian Gene Collection (MGC).</title>
        <authorList>
            <consortium name="The MGC Project Team"/>
        </authorList>
    </citation>
    <scope>NUCLEOTIDE SEQUENCE [LARGE SCALE MRNA]</scope>
</reference>
<gene>
    <name type="primary">MAS1L</name>
    <name type="synonym">MRG</name>
</gene>
<protein>
    <recommendedName>
        <fullName>Mas-related G-protein coupled receptor MRG</fullName>
        <shortName>MAS-R</shortName>
    </recommendedName>
    <alternativeName>
        <fullName>MAS1-like</fullName>
    </alternativeName>
</protein>